<organism>
    <name type="scientific">Shewanella sp. (strain MR-7)</name>
    <dbReference type="NCBI Taxonomy" id="60481"/>
    <lineage>
        <taxon>Bacteria</taxon>
        <taxon>Pseudomonadati</taxon>
        <taxon>Pseudomonadota</taxon>
        <taxon>Gammaproteobacteria</taxon>
        <taxon>Alteromonadales</taxon>
        <taxon>Shewanellaceae</taxon>
        <taxon>Shewanella</taxon>
    </lineage>
</organism>
<sequence>MSQQETHGFQTEVKQLLHLMIHSLYSNKEIFLRELVSNAADAADKLRYLALTNDALYEGDGELRVRISADKEKGTVTIEDNGVGMTRDGVIEHLGTIAKSGTAEFFKNLSGEASKDSQLIGQFGVGFYSAFIVAKKVTVRTRAAGHKANEAVLWESEGEGSFTVDTITKASRGTEITLHLRDEEKEFADEWRLRSIITKYSDHISVPVEMWQEGTPERDGPDGEKIPATEGYWKVMNKATALWMRNKSEISDEEYQEFYKHISHDYTDALLWSHNRVEGKQEYTNLLYIPSKAPWDLWNRDRKHGLKLFVQRVFIMDDAEQFMPSYLRFVQGLIDSNDLPLNVSREILQDNHITKAMRTGITKRVLGMLEKLAKDDAEKYQQFWAEFGQVLKEGPAEDFANRERIAGLLRFASTHTGSAAPTVSLDDYLSRMKEGQNKIYYIVADSHEAAANSPHLELLRKKGIEVLLMSERIDEWLINHLTEYKEKQLHSVTRGELELGELEDAAEKEAQEKLAEESAPLVERIKAALGASVADVKVTSRLTDTPACVVTGEGEMSSQMIKLMQAAGQPVPEVKPTFEINPAHPLVSRLNDLQDEAAFADWSNLLLQQAQLSEKGSLADPSAFIKLMNQMLLANLK</sequence>
<evidence type="ECO:0000255" key="1">
    <source>
        <dbReference type="HAMAP-Rule" id="MF_00505"/>
    </source>
</evidence>
<comment type="function">
    <text evidence="1">Molecular chaperone. Has ATPase activity.</text>
</comment>
<comment type="subunit">
    <text evidence="1">Homodimer.</text>
</comment>
<comment type="subcellular location">
    <subcellularLocation>
        <location evidence="1">Cytoplasm</location>
    </subcellularLocation>
</comment>
<comment type="similarity">
    <text evidence="1">Belongs to the heat shock protein 90 family.</text>
</comment>
<accession>Q0HU95</accession>
<dbReference type="EMBL" id="CP000444">
    <property type="protein sequence ID" value="ABI43310.1"/>
    <property type="molecule type" value="Genomic_DNA"/>
</dbReference>
<dbReference type="SMR" id="Q0HU95"/>
<dbReference type="KEGG" id="shm:Shewmr7_2323"/>
<dbReference type="HOGENOM" id="CLU_006684_3_0_6"/>
<dbReference type="GO" id="GO:0005737">
    <property type="term" value="C:cytoplasm"/>
    <property type="evidence" value="ECO:0007669"/>
    <property type="project" value="UniProtKB-SubCell"/>
</dbReference>
<dbReference type="GO" id="GO:0005524">
    <property type="term" value="F:ATP binding"/>
    <property type="evidence" value="ECO:0007669"/>
    <property type="project" value="UniProtKB-UniRule"/>
</dbReference>
<dbReference type="GO" id="GO:0016887">
    <property type="term" value="F:ATP hydrolysis activity"/>
    <property type="evidence" value="ECO:0007669"/>
    <property type="project" value="InterPro"/>
</dbReference>
<dbReference type="GO" id="GO:0140662">
    <property type="term" value="F:ATP-dependent protein folding chaperone"/>
    <property type="evidence" value="ECO:0007669"/>
    <property type="project" value="InterPro"/>
</dbReference>
<dbReference type="GO" id="GO:0051082">
    <property type="term" value="F:unfolded protein binding"/>
    <property type="evidence" value="ECO:0007669"/>
    <property type="project" value="UniProtKB-UniRule"/>
</dbReference>
<dbReference type="CDD" id="cd16927">
    <property type="entry name" value="HATPase_Hsp90-like"/>
    <property type="match status" value="1"/>
</dbReference>
<dbReference type="FunFam" id="3.30.230.80:FF:000002">
    <property type="entry name" value="Molecular chaperone HtpG"/>
    <property type="match status" value="1"/>
</dbReference>
<dbReference type="FunFam" id="3.30.565.10:FF:000009">
    <property type="entry name" value="Molecular chaperone HtpG"/>
    <property type="match status" value="1"/>
</dbReference>
<dbReference type="Gene3D" id="3.30.230.80">
    <property type="match status" value="1"/>
</dbReference>
<dbReference type="Gene3D" id="3.40.50.11260">
    <property type="match status" value="1"/>
</dbReference>
<dbReference type="Gene3D" id="1.20.120.790">
    <property type="entry name" value="Heat shock protein 90, C-terminal domain"/>
    <property type="match status" value="1"/>
</dbReference>
<dbReference type="Gene3D" id="3.30.565.10">
    <property type="entry name" value="Histidine kinase-like ATPase, C-terminal domain"/>
    <property type="match status" value="1"/>
</dbReference>
<dbReference type="HAMAP" id="MF_00505">
    <property type="entry name" value="HSP90"/>
    <property type="match status" value="1"/>
</dbReference>
<dbReference type="InterPro" id="IPR036890">
    <property type="entry name" value="HATPase_C_sf"/>
</dbReference>
<dbReference type="InterPro" id="IPR019805">
    <property type="entry name" value="Heat_shock_protein_90_CS"/>
</dbReference>
<dbReference type="InterPro" id="IPR037196">
    <property type="entry name" value="HSP90_C"/>
</dbReference>
<dbReference type="InterPro" id="IPR001404">
    <property type="entry name" value="Hsp90_fam"/>
</dbReference>
<dbReference type="InterPro" id="IPR020575">
    <property type="entry name" value="Hsp90_N"/>
</dbReference>
<dbReference type="InterPro" id="IPR020568">
    <property type="entry name" value="Ribosomal_Su5_D2-typ_SF"/>
</dbReference>
<dbReference type="NCBIfam" id="NF003555">
    <property type="entry name" value="PRK05218.1"/>
    <property type="match status" value="1"/>
</dbReference>
<dbReference type="PANTHER" id="PTHR11528">
    <property type="entry name" value="HEAT SHOCK PROTEIN 90 FAMILY MEMBER"/>
    <property type="match status" value="1"/>
</dbReference>
<dbReference type="Pfam" id="PF13589">
    <property type="entry name" value="HATPase_c_3"/>
    <property type="match status" value="1"/>
</dbReference>
<dbReference type="Pfam" id="PF00183">
    <property type="entry name" value="HSP90"/>
    <property type="match status" value="1"/>
</dbReference>
<dbReference type="PIRSF" id="PIRSF002583">
    <property type="entry name" value="Hsp90"/>
    <property type="match status" value="1"/>
</dbReference>
<dbReference type="PRINTS" id="PR00775">
    <property type="entry name" value="HEATSHOCK90"/>
</dbReference>
<dbReference type="SMART" id="SM00387">
    <property type="entry name" value="HATPase_c"/>
    <property type="match status" value="1"/>
</dbReference>
<dbReference type="SUPFAM" id="SSF55874">
    <property type="entry name" value="ATPase domain of HSP90 chaperone/DNA topoisomerase II/histidine kinase"/>
    <property type="match status" value="1"/>
</dbReference>
<dbReference type="SUPFAM" id="SSF110942">
    <property type="entry name" value="HSP90 C-terminal domain"/>
    <property type="match status" value="1"/>
</dbReference>
<dbReference type="SUPFAM" id="SSF54211">
    <property type="entry name" value="Ribosomal protein S5 domain 2-like"/>
    <property type="match status" value="1"/>
</dbReference>
<dbReference type="PROSITE" id="PS00298">
    <property type="entry name" value="HSP90"/>
    <property type="match status" value="1"/>
</dbReference>
<name>HTPG_SHESR</name>
<protein>
    <recommendedName>
        <fullName evidence="1">Chaperone protein HtpG</fullName>
    </recommendedName>
    <alternativeName>
        <fullName evidence="1">Heat shock protein HtpG</fullName>
    </alternativeName>
    <alternativeName>
        <fullName evidence="1">High temperature protein G</fullName>
    </alternativeName>
</protein>
<proteinExistence type="inferred from homology"/>
<reference key="1">
    <citation type="submission" date="2006-08" db="EMBL/GenBank/DDBJ databases">
        <title>Complete sequence of chromosome 1 of Shewanella sp. MR-7.</title>
        <authorList>
            <person name="Copeland A."/>
            <person name="Lucas S."/>
            <person name="Lapidus A."/>
            <person name="Barry K."/>
            <person name="Detter J.C."/>
            <person name="Glavina del Rio T."/>
            <person name="Hammon N."/>
            <person name="Israni S."/>
            <person name="Dalin E."/>
            <person name="Tice H."/>
            <person name="Pitluck S."/>
            <person name="Kiss H."/>
            <person name="Brettin T."/>
            <person name="Bruce D."/>
            <person name="Han C."/>
            <person name="Tapia R."/>
            <person name="Gilna P."/>
            <person name="Schmutz J."/>
            <person name="Larimer F."/>
            <person name="Land M."/>
            <person name="Hauser L."/>
            <person name="Kyrpides N."/>
            <person name="Mikhailova N."/>
            <person name="Nealson K."/>
            <person name="Konstantinidis K."/>
            <person name="Klappenbach J."/>
            <person name="Tiedje J."/>
            <person name="Richardson P."/>
        </authorList>
    </citation>
    <scope>NUCLEOTIDE SEQUENCE [LARGE SCALE GENOMIC DNA]</scope>
    <source>
        <strain>MR-7</strain>
    </source>
</reference>
<keyword id="KW-0067">ATP-binding</keyword>
<keyword id="KW-0143">Chaperone</keyword>
<keyword id="KW-0963">Cytoplasm</keyword>
<keyword id="KW-0547">Nucleotide-binding</keyword>
<keyword id="KW-0346">Stress response</keyword>
<gene>
    <name evidence="1" type="primary">htpG</name>
    <name type="ordered locus">Shewmr7_2323</name>
</gene>
<feature type="chain" id="PRO_1000014959" description="Chaperone protein HtpG">
    <location>
        <begin position="1"/>
        <end position="637"/>
    </location>
</feature>
<feature type="region of interest" description="A; substrate-binding" evidence="1">
    <location>
        <begin position="1"/>
        <end position="345"/>
    </location>
</feature>
<feature type="region of interest" description="B" evidence="1">
    <location>
        <begin position="346"/>
        <end position="562"/>
    </location>
</feature>
<feature type="region of interest" description="C" evidence="1">
    <location>
        <begin position="563"/>
        <end position="637"/>
    </location>
</feature>